<dbReference type="EC" id="2.7.7.23" evidence="1"/>
<dbReference type="EC" id="2.3.1.157" evidence="1"/>
<dbReference type="EMBL" id="BX548175">
    <property type="protein sequence ID" value="CAE20575.1"/>
    <property type="molecule type" value="Genomic_DNA"/>
</dbReference>
<dbReference type="RefSeq" id="WP_011129779.1">
    <property type="nucleotide sequence ID" value="NC_005071.1"/>
</dbReference>
<dbReference type="SMR" id="Q7V8F2"/>
<dbReference type="KEGG" id="pmt:PMT_0400"/>
<dbReference type="eggNOG" id="COG1207">
    <property type="taxonomic scope" value="Bacteria"/>
</dbReference>
<dbReference type="HOGENOM" id="CLU_029499_15_2_3"/>
<dbReference type="OrthoDB" id="9775031at2"/>
<dbReference type="UniPathway" id="UPA00113">
    <property type="reaction ID" value="UER00532"/>
</dbReference>
<dbReference type="UniPathway" id="UPA00113">
    <property type="reaction ID" value="UER00533"/>
</dbReference>
<dbReference type="UniPathway" id="UPA00973"/>
<dbReference type="Proteomes" id="UP000001423">
    <property type="component" value="Chromosome"/>
</dbReference>
<dbReference type="GO" id="GO:0031470">
    <property type="term" value="C:carboxysome"/>
    <property type="evidence" value="ECO:0007669"/>
    <property type="project" value="UniProtKB-ARBA"/>
</dbReference>
<dbReference type="GO" id="GO:0005737">
    <property type="term" value="C:cytoplasm"/>
    <property type="evidence" value="ECO:0007669"/>
    <property type="project" value="UniProtKB-SubCell"/>
</dbReference>
<dbReference type="GO" id="GO:0016020">
    <property type="term" value="C:membrane"/>
    <property type="evidence" value="ECO:0007669"/>
    <property type="project" value="GOC"/>
</dbReference>
<dbReference type="GO" id="GO:0019134">
    <property type="term" value="F:glucosamine-1-phosphate N-acetyltransferase activity"/>
    <property type="evidence" value="ECO:0007669"/>
    <property type="project" value="UniProtKB-UniRule"/>
</dbReference>
<dbReference type="GO" id="GO:0000287">
    <property type="term" value="F:magnesium ion binding"/>
    <property type="evidence" value="ECO:0007669"/>
    <property type="project" value="UniProtKB-UniRule"/>
</dbReference>
<dbReference type="GO" id="GO:0043886">
    <property type="term" value="F:structural constituent of carboxysome shell"/>
    <property type="evidence" value="ECO:0007669"/>
    <property type="project" value="UniProtKB-ARBA"/>
</dbReference>
<dbReference type="GO" id="GO:0003977">
    <property type="term" value="F:UDP-N-acetylglucosamine diphosphorylase activity"/>
    <property type="evidence" value="ECO:0007669"/>
    <property type="project" value="UniProtKB-UniRule"/>
</dbReference>
<dbReference type="GO" id="GO:0000902">
    <property type="term" value="P:cell morphogenesis"/>
    <property type="evidence" value="ECO:0007669"/>
    <property type="project" value="UniProtKB-UniRule"/>
</dbReference>
<dbReference type="GO" id="GO:0071555">
    <property type="term" value="P:cell wall organization"/>
    <property type="evidence" value="ECO:0007669"/>
    <property type="project" value="UniProtKB-KW"/>
</dbReference>
<dbReference type="GO" id="GO:0009245">
    <property type="term" value="P:lipid A biosynthetic process"/>
    <property type="evidence" value="ECO:0007669"/>
    <property type="project" value="UniProtKB-UniRule"/>
</dbReference>
<dbReference type="GO" id="GO:0009252">
    <property type="term" value="P:peptidoglycan biosynthetic process"/>
    <property type="evidence" value="ECO:0007669"/>
    <property type="project" value="UniProtKB-UniRule"/>
</dbReference>
<dbReference type="GO" id="GO:0008360">
    <property type="term" value="P:regulation of cell shape"/>
    <property type="evidence" value="ECO:0007669"/>
    <property type="project" value="UniProtKB-KW"/>
</dbReference>
<dbReference type="GO" id="GO:0006048">
    <property type="term" value="P:UDP-N-acetylglucosamine biosynthetic process"/>
    <property type="evidence" value="ECO:0007669"/>
    <property type="project" value="UniProtKB-UniPathway"/>
</dbReference>
<dbReference type="CDD" id="cd02540">
    <property type="entry name" value="GT2_GlmU_N_bac"/>
    <property type="match status" value="1"/>
</dbReference>
<dbReference type="CDD" id="cd03353">
    <property type="entry name" value="LbH_GlmU_C"/>
    <property type="match status" value="1"/>
</dbReference>
<dbReference type="Gene3D" id="2.160.10.10">
    <property type="entry name" value="Hexapeptide repeat proteins"/>
    <property type="match status" value="1"/>
</dbReference>
<dbReference type="Gene3D" id="3.90.550.10">
    <property type="entry name" value="Spore Coat Polysaccharide Biosynthesis Protein SpsA, Chain A"/>
    <property type="match status" value="1"/>
</dbReference>
<dbReference type="HAMAP" id="MF_01631">
    <property type="entry name" value="GlmU"/>
    <property type="match status" value="1"/>
</dbReference>
<dbReference type="InterPro" id="IPR005882">
    <property type="entry name" value="Bifunctional_GlmU"/>
</dbReference>
<dbReference type="InterPro" id="IPR050065">
    <property type="entry name" value="GlmU-like"/>
</dbReference>
<dbReference type="InterPro" id="IPR038009">
    <property type="entry name" value="GlmU_C_LbH"/>
</dbReference>
<dbReference type="InterPro" id="IPR001451">
    <property type="entry name" value="Hexapep"/>
</dbReference>
<dbReference type="InterPro" id="IPR025877">
    <property type="entry name" value="MobA-like_NTP_Trfase"/>
</dbReference>
<dbReference type="InterPro" id="IPR029044">
    <property type="entry name" value="Nucleotide-diphossugar_trans"/>
</dbReference>
<dbReference type="InterPro" id="IPR011004">
    <property type="entry name" value="Trimer_LpxA-like_sf"/>
</dbReference>
<dbReference type="NCBIfam" id="TIGR01173">
    <property type="entry name" value="glmU"/>
    <property type="match status" value="1"/>
</dbReference>
<dbReference type="NCBIfam" id="NF010940">
    <property type="entry name" value="PRK14360.1"/>
    <property type="match status" value="1"/>
</dbReference>
<dbReference type="PANTHER" id="PTHR43584:SF3">
    <property type="entry name" value="BIFUNCTIONAL PROTEIN GLMU"/>
    <property type="match status" value="1"/>
</dbReference>
<dbReference type="PANTHER" id="PTHR43584">
    <property type="entry name" value="NUCLEOTIDYL TRANSFERASE"/>
    <property type="match status" value="1"/>
</dbReference>
<dbReference type="Pfam" id="PF00132">
    <property type="entry name" value="Hexapep"/>
    <property type="match status" value="2"/>
</dbReference>
<dbReference type="Pfam" id="PF12804">
    <property type="entry name" value="NTP_transf_3"/>
    <property type="match status" value="1"/>
</dbReference>
<dbReference type="SUPFAM" id="SSF53448">
    <property type="entry name" value="Nucleotide-diphospho-sugar transferases"/>
    <property type="match status" value="1"/>
</dbReference>
<dbReference type="SUPFAM" id="SSF51161">
    <property type="entry name" value="Trimeric LpxA-like enzymes"/>
    <property type="match status" value="1"/>
</dbReference>
<reference key="1">
    <citation type="journal article" date="2003" name="Nature">
        <title>Genome divergence in two Prochlorococcus ecotypes reflects oceanic niche differentiation.</title>
        <authorList>
            <person name="Rocap G."/>
            <person name="Larimer F.W."/>
            <person name="Lamerdin J.E."/>
            <person name="Malfatti S."/>
            <person name="Chain P."/>
            <person name="Ahlgren N.A."/>
            <person name="Arellano A."/>
            <person name="Coleman M."/>
            <person name="Hauser L."/>
            <person name="Hess W.R."/>
            <person name="Johnson Z.I."/>
            <person name="Land M.L."/>
            <person name="Lindell D."/>
            <person name="Post A.F."/>
            <person name="Regala W."/>
            <person name="Shah M."/>
            <person name="Shaw S.L."/>
            <person name="Steglich C."/>
            <person name="Sullivan M.B."/>
            <person name="Ting C.S."/>
            <person name="Tolonen A."/>
            <person name="Webb E.A."/>
            <person name="Zinser E.R."/>
            <person name="Chisholm S.W."/>
        </authorList>
    </citation>
    <scope>NUCLEOTIDE SEQUENCE [LARGE SCALE GENOMIC DNA]</scope>
    <source>
        <strain>MIT 9313</strain>
    </source>
</reference>
<feature type="chain" id="PRO_0000233816" description="Bifunctional protein GlmU">
    <location>
        <begin position="1"/>
        <end position="446"/>
    </location>
</feature>
<feature type="region of interest" description="Pyrophosphorylase" evidence="1">
    <location>
        <begin position="1"/>
        <end position="226"/>
    </location>
</feature>
<feature type="region of interest" description="Linker" evidence="1">
    <location>
        <begin position="227"/>
        <end position="247"/>
    </location>
</feature>
<feature type="region of interest" description="N-acetyltransferase" evidence="1">
    <location>
        <begin position="248"/>
        <end position="446"/>
    </location>
</feature>
<feature type="active site" description="Proton acceptor" evidence="1">
    <location>
        <position position="359"/>
    </location>
</feature>
<feature type="binding site" evidence="1">
    <location>
        <begin position="7"/>
        <end position="10"/>
    </location>
    <ligand>
        <name>UDP-N-acetyl-alpha-D-glucosamine</name>
        <dbReference type="ChEBI" id="CHEBI:57705"/>
    </ligand>
</feature>
<feature type="binding site" evidence="1">
    <location>
        <position position="21"/>
    </location>
    <ligand>
        <name>UDP-N-acetyl-alpha-D-glucosamine</name>
        <dbReference type="ChEBI" id="CHEBI:57705"/>
    </ligand>
</feature>
<feature type="binding site" evidence="1">
    <location>
        <position position="73"/>
    </location>
    <ligand>
        <name>UDP-N-acetyl-alpha-D-glucosamine</name>
        <dbReference type="ChEBI" id="CHEBI:57705"/>
    </ligand>
</feature>
<feature type="binding site" evidence="1">
    <location>
        <begin position="78"/>
        <end position="79"/>
    </location>
    <ligand>
        <name>UDP-N-acetyl-alpha-D-glucosamine</name>
        <dbReference type="ChEBI" id="CHEBI:57705"/>
    </ligand>
</feature>
<feature type="binding site" evidence="1">
    <location>
        <position position="103"/>
    </location>
    <ligand>
        <name>Mg(2+)</name>
        <dbReference type="ChEBI" id="CHEBI:18420"/>
    </ligand>
</feature>
<feature type="binding site" evidence="1">
    <location>
        <position position="140"/>
    </location>
    <ligand>
        <name>UDP-N-acetyl-alpha-D-glucosamine</name>
        <dbReference type="ChEBI" id="CHEBI:57705"/>
    </ligand>
</feature>
<feature type="binding site" evidence="1">
    <location>
        <position position="155"/>
    </location>
    <ligand>
        <name>UDP-N-acetyl-alpha-D-glucosamine</name>
        <dbReference type="ChEBI" id="CHEBI:57705"/>
    </ligand>
</feature>
<feature type="binding site" evidence="1">
    <location>
        <position position="170"/>
    </location>
    <ligand>
        <name>UDP-N-acetyl-alpha-D-glucosamine</name>
        <dbReference type="ChEBI" id="CHEBI:57705"/>
    </ligand>
</feature>
<feature type="binding site" evidence="1">
    <location>
        <position position="224"/>
    </location>
    <ligand>
        <name>Mg(2+)</name>
        <dbReference type="ChEBI" id="CHEBI:18420"/>
    </ligand>
</feature>
<feature type="binding site" evidence="1">
    <location>
        <position position="224"/>
    </location>
    <ligand>
        <name>UDP-N-acetyl-alpha-D-glucosamine</name>
        <dbReference type="ChEBI" id="CHEBI:57705"/>
    </ligand>
</feature>
<feature type="binding site" evidence="1">
    <location>
        <position position="329"/>
    </location>
    <ligand>
        <name>UDP-N-acetyl-alpha-D-glucosamine</name>
        <dbReference type="ChEBI" id="CHEBI:57705"/>
    </ligand>
</feature>
<feature type="binding site" evidence="1">
    <location>
        <position position="347"/>
    </location>
    <ligand>
        <name>UDP-N-acetyl-alpha-D-glucosamine</name>
        <dbReference type="ChEBI" id="CHEBI:57705"/>
    </ligand>
</feature>
<feature type="binding site" evidence="1">
    <location>
        <position position="362"/>
    </location>
    <ligand>
        <name>UDP-N-acetyl-alpha-D-glucosamine</name>
        <dbReference type="ChEBI" id="CHEBI:57705"/>
    </ligand>
</feature>
<feature type="binding site" evidence="1">
    <location>
        <position position="373"/>
    </location>
    <ligand>
        <name>UDP-N-acetyl-alpha-D-glucosamine</name>
        <dbReference type="ChEBI" id="CHEBI:57705"/>
    </ligand>
</feature>
<feature type="binding site" evidence="1">
    <location>
        <position position="376"/>
    </location>
    <ligand>
        <name>acetyl-CoA</name>
        <dbReference type="ChEBI" id="CHEBI:57288"/>
    </ligand>
</feature>
<feature type="binding site" evidence="1">
    <location>
        <begin position="382"/>
        <end position="383"/>
    </location>
    <ligand>
        <name>acetyl-CoA</name>
        <dbReference type="ChEBI" id="CHEBI:57288"/>
    </ligand>
</feature>
<feature type="binding site" evidence="1">
    <location>
        <position position="419"/>
    </location>
    <ligand>
        <name>acetyl-CoA</name>
        <dbReference type="ChEBI" id="CHEBI:57288"/>
    </ligand>
</feature>
<feature type="binding site" evidence="1">
    <location>
        <position position="436"/>
    </location>
    <ligand>
        <name>acetyl-CoA</name>
        <dbReference type="ChEBI" id="CHEBI:57288"/>
    </ligand>
</feature>
<protein>
    <recommendedName>
        <fullName evidence="1">Bifunctional protein GlmU</fullName>
    </recommendedName>
    <domain>
        <recommendedName>
            <fullName evidence="1">UDP-N-acetylglucosamine pyrophosphorylase</fullName>
            <ecNumber evidence="1">2.7.7.23</ecNumber>
        </recommendedName>
        <alternativeName>
            <fullName evidence="1">N-acetylglucosamine-1-phosphate uridyltransferase</fullName>
        </alternativeName>
    </domain>
    <domain>
        <recommendedName>
            <fullName evidence="1">Glucosamine-1-phosphate N-acetyltransferase</fullName>
            <ecNumber evidence="1">2.3.1.157</ecNumber>
        </recommendedName>
    </domain>
</protein>
<comment type="function">
    <text evidence="1">Catalyzes the last two sequential reactions in the de novo biosynthetic pathway for UDP-N-acetylglucosamine (UDP-GlcNAc). The C-terminal domain catalyzes the transfer of acetyl group from acetyl coenzyme A to glucosamine-1-phosphate (GlcN-1-P) to produce N-acetylglucosamine-1-phosphate (GlcNAc-1-P), which is converted into UDP-GlcNAc by the transfer of uridine 5-monophosphate (from uridine 5-triphosphate), a reaction catalyzed by the N-terminal domain.</text>
</comment>
<comment type="catalytic activity">
    <reaction evidence="1">
        <text>alpha-D-glucosamine 1-phosphate + acetyl-CoA = N-acetyl-alpha-D-glucosamine 1-phosphate + CoA + H(+)</text>
        <dbReference type="Rhea" id="RHEA:13725"/>
        <dbReference type="ChEBI" id="CHEBI:15378"/>
        <dbReference type="ChEBI" id="CHEBI:57287"/>
        <dbReference type="ChEBI" id="CHEBI:57288"/>
        <dbReference type="ChEBI" id="CHEBI:57776"/>
        <dbReference type="ChEBI" id="CHEBI:58516"/>
        <dbReference type="EC" id="2.3.1.157"/>
    </reaction>
</comment>
<comment type="catalytic activity">
    <reaction evidence="1">
        <text>N-acetyl-alpha-D-glucosamine 1-phosphate + UTP + H(+) = UDP-N-acetyl-alpha-D-glucosamine + diphosphate</text>
        <dbReference type="Rhea" id="RHEA:13509"/>
        <dbReference type="ChEBI" id="CHEBI:15378"/>
        <dbReference type="ChEBI" id="CHEBI:33019"/>
        <dbReference type="ChEBI" id="CHEBI:46398"/>
        <dbReference type="ChEBI" id="CHEBI:57705"/>
        <dbReference type="ChEBI" id="CHEBI:57776"/>
        <dbReference type="EC" id="2.7.7.23"/>
    </reaction>
</comment>
<comment type="cofactor">
    <cofactor evidence="1">
        <name>Mg(2+)</name>
        <dbReference type="ChEBI" id="CHEBI:18420"/>
    </cofactor>
    <text evidence="1">Binds 1 Mg(2+) ion per subunit.</text>
</comment>
<comment type="pathway">
    <text evidence="1">Nucleotide-sugar biosynthesis; UDP-N-acetyl-alpha-D-glucosamine biosynthesis; N-acetyl-alpha-D-glucosamine 1-phosphate from alpha-D-glucosamine 6-phosphate (route II): step 2/2.</text>
</comment>
<comment type="pathway">
    <text evidence="1">Nucleotide-sugar biosynthesis; UDP-N-acetyl-alpha-D-glucosamine biosynthesis; UDP-N-acetyl-alpha-D-glucosamine from N-acetyl-alpha-D-glucosamine 1-phosphate: step 1/1.</text>
</comment>
<comment type="pathway">
    <text evidence="1">Bacterial outer membrane biogenesis; LPS lipid A biosynthesis.</text>
</comment>
<comment type="subunit">
    <text evidence="1">Homotrimer.</text>
</comment>
<comment type="subcellular location">
    <subcellularLocation>
        <location evidence="1">Cytoplasm</location>
    </subcellularLocation>
</comment>
<comment type="similarity">
    <text evidence="1">In the N-terminal section; belongs to the N-acetylglucosamine-1-phosphate uridyltransferase family.</text>
</comment>
<comment type="similarity">
    <text evidence="1">In the C-terminal section; belongs to the transferase hexapeptide repeat family.</text>
</comment>
<sequence length="446" mass="47744">MLAVAILAAGKGTRMKSCLPKVLQPLAGSTLVERVLTSCSGLQPQRRLLIVGHQAQEVQQQLTDWQGLEFVVQQPQNGTGHAVQQVLPVLEGFDGELLVLNGDVPLLRPSTIEHLVNEHRSSGADVTLLTARLADPTGYGRVFSDQQGRVSSIVEHRDCSDEQRHNNLTNAGIYCFNWKKLAAVLPQLCSDNDQGELYLTDTVALLPIAMHVEVADPDEVNGINDRCQLANCEALLQERLRNYWMKEGVTFTDPASCTLSEDCQFGRDVVIEPQTHLRGCCNIGDGCQLGPGSLIENAELGHGVSVLHSVVCDAKVGNEVAIGPFSHLRPGAGIADQCRIGNFVEIKKSQIGEGSKVNHLSYIGDAQLGRHVNVGAGTITANYDGVRKHLTVVGDNSKTGANSVLVAPIVLGSDVTVGAGSTLTKDVPNGALALGRSKQLIKNGWQ</sequence>
<keyword id="KW-0012">Acyltransferase</keyword>
<keyword id="KW-0133">Cell shape</keyword>
<keyword id="KW-0961">Cell wall biogenesis/degradation</keyword>
<keyword id="KW-0963">Cytoplasm</keyword>
<keyword id="KW-0460">Magnesium</keyword>
<keyword id="KW-0479">Metal-binding</keyword>
<keyword id="KW-0511">Multifunctional enzyme</keyword>
<keyword id="KW-0548">Nucleotidyltransferase</keyword>
<keyword id="KW-0573">Peptidoglycan synthesis</keyword>
<keyword id="KW-1185">Reference proteome</keyword>
<keyword id="KW-0677">Repeat</keyword>
<keyword id="KW-0808">Transferase</keyword>
<accession>Q7V8F2</accession>
<proteinExistence type="inferred from homology"/>
<gene>
    <name evidence="1" type="primary">glmU</name>
    <name type="ordered locus">PMT_0400</name>
</gene>
<evidence type="ECO:0000255" key="1">
    <source>
        <dbReference type="HAMAP-Rule" id="MF_01631"/>
    </source>
</evidence>
<organism>
    <name type="scientific">Prochlorococcus marinus (strain MIT 9313)</name>
    <dbReference type="NCBI Taxonomy" id="74547"/>
    <lineage>
        <taxon>Bacteria</taxon>
        <taxon>Bacillati</taxon>
        <taxon>Cyanobacteriota</taxon>
        <taxon>Cyanophyceae</taxon>
        <taxon>Synechococcales</taxon>
        <taxon>Prochlorococcaceae</taxon>
        <taxon>Prochlorococcus</taxon>
    </lineage>
</organism>
<name>GLMU_PROMM</name>